<proteinExistence type="inferred from homology"/>
<dbReference type="EMBL" id="CP000753">
    <property type="protein sequence ID" value="ABS09211.1"/>
    <property type="molecule type" value="Genomic_DNA"/>
</dbReference>
<dbReference type="RefSeq" id="WP_012089778.1">
    <property type="nucleotide sequence ID" value="NC_009665.1"/>
</dbReference>
<dbReference type="SMR" id="A6WQX2"/>
<dbReference type="KEGG" id="sbm:Shew185_3080"/>
<dbReference type="HOGENOM" id="CLU_051840_0_0_6"/>
<dbReference type="GO" id="GO:0080146">
    <property type="term" value="F:L-cysteine desulfhydrase activity"/>
    <property type="evidence" value="ECO:0007669"/>
    <property type="project" value="TreeGrafter"/>
</dbReference>
<dbReference type="GO" id="GO:0019450">
    <property type="term" value="P:L-cysteine catabolic process to pyruvate"/>
    <property type="evidence" value="ECO:0007669"/>
    <property type="project" value="TreeGrafter"/>
</dbReference>
<dbReference type="HAMAP" id="MF_01845">
    <property type="entry name" value="UPF0597"/>
    <property type="match status" value="1"/>
</dbReference>
<dbReference type="InterPro" id="IPR005130">
    <property type="entry name" value="Ser_deHydtase-like_asu"/>
</dbReference>
<dbReference type="InterPro" id="IPR021144">
    <property type="entry name" value="UPF0597"/>
</dbReference>
<dbReference type="PANTHER" id="PTHR30501">
    <property type="entry name" value="UPF0597 PROTEIN YHAM"/>
    <property type="match status" value="1"/>
</dbReference>
<dbReference type="PANTHER" id="PTHR30501:SF2">
    <property type="entry name" value="UPF0597 PROTEIN YHAM"/>
    <property type="match status" value="1"/>
</dbReference>
<dbReference type="Pfam" id="PF03313">
    <property type="entry name" value="SDH_alpha"/>
    <property type="match status" value="1"/>
</dbReference>
<dbReference type="PIRSF" id="PIRSF006054">
    <property type="entry name" value="UCP006054"/>
    <property type="match status" value="1"/>
</dbReference>
<evidence type="ECO:0000255" key="1">
    <source>
        <dbReference type="HAMAP-Rule" id="MF_01845"/>
    </source>
</evidence>
<feature type="chain" id="PRO_0000339845" description="UPF0597 protein Shew185_3080">
    <location>
        <begin position="1"/>
        <end position="424"/>
    </location>
</feature>
<sequence length="424" mass="44014">MKPQWQQYIHIIKQVVKPALGCTEPIAAAYAAAVARALLGVEPDSIAVQVSDNLYKNSMGVFVPGTGKIGLAIAAAAGAIAGNPDAGLEVLAVITPEQVAKAQALIDAGKVTVERTETAEFIYCCVIAKKGDREALVKICGGHTLIAEKRLNGESVFSVDSTQAKATGSICEGVDITIESIYRFAQEVPFEEIKFILEASELNGKLSDEGMANPYGLEVGRTMKSGIAAGIIGEDLLNKIVMLTAAASDARMGGANLPAMSNLGSGNQGIAATIPVVLTAQCYKVSEEQLARALIMSHLGAIYIKSHYPPLSAFCGNTVTSAAASMAMVYLAGGSFEQSCFAIQNVISDSSGMVCDGAKASCAMKVSTSSSAAVRSFLMALSSHNVSGQGIIATDVEKTIKNIGKMILNGMSSTDVTIIDIMSA</sequence>
<reference key="1">
    <citation type="submission" date="2007-07" db="EMBL/GenBank/DDBJ databases">
        <title>Complete sequence of chromosome of Shewanella baltica OS185.</title>
        <authorList>
            <consortium name="US DOE Joint Genome Institute"/>
            <person name="Copeland A."/>
            <person name="Lucas S."/>
            <person name="Lapidus A."/>
            <person name="Barry K."/>
            <person name="Glavina del Rio T."/>
            <person name="Dalin E."/>
            <person name="Tice H."/>
            <person name="Pitluck S."/>
            <person name="Sims D."/>
            <person name="Brettin T."/>
            <person name="Bruce D."/>
            <person name="Detter J.C."/>
            <person name="Han C."/>
            <person name="Schmutz J."/>
            <person name="Larimer F."/>
            <person name="Land M."/>
            <person name="Hauser L."/>
            <person name="Kyrpides N."/>
            <person name="Mikhailova N."/>
            <person name="Brettar I."/>
            <person name="Rodrigues J."/>
            <person name="Konstantinidis K."/>
            <person name="Tiedje J."/>
            <person name="Richardson P."/>
        </authorList>
    </citation>
    <scope>NUCLEOTIDE SEQUENCE [LARGE SCALE GENOMIC DNA]</scope>
    <source>
        <strain>OS185</strain>
    </source>
</reference>
<accession>A6WQX2</accession>
<gene>
    <name type="ordered locus">Shew185_3080</name>
</gene>
<comment type="similarity">
    <text evidence="1">Belongs to the UPF0597 family.</text>
</comment>
<name>Y3080_SHEB8</name>
<protein>
    <recommendedName>
        <fullName evidence="1">UPF0597 protein Shew185_3080</fullName>
    </recommendedName>
</protein>
<organism>
    <name type="scientific">Shewanella baltica (strain OS185)</name>
    <dbReference type="NCBI Taxonomy" id="402882"/>
    <lineage>
        <taxon>Bacteria</taxon>
        <taxon>Pseudomonadati</taxon>
        <taxon>Pseudomonadota</taxon>
        <taxon>Gammaproteobacteria</taxon>
        <taxon>Alteromonadales</taxon>
        <taxon>Shewanellaceae</taxon>
        <taxon>Shewanella</taxon>
    </lineage>
</organism>